<feature type="chain" id="PRO_0000098785" description="Tryptophan synthase alpha chain">
    <location>
        <begin position="1"/>
        <end position="276"/>
    </location>
</feature>
<feature type="active site" description="Proton acceptor" evidence="1">
    <location>
        <position position="55"/>
    </location>
</feature>
<feature type="active site" description="Proton acceptor" evidence="1">
    <location>
        <position position="66"/>
    </location>
</feature>
<reference key="1">
    <citation type="journal article" date="2003" name="DNA Res.">
        <title>Complete genome structure of Gloeobacter violaceus PCC 7421, a cyanobacterium that lacks thylakoids.</title>
        <authorList>
            <person name="Nakamura Y."/>
            <person name="Kaneko T."/>
            <person name="Sato S."/>
            <person name="Mimuro M."/>
            <person name="Miyashita H."/>
            <person name="Tsuchiya T."/>
            <person name="Sasamoto S."/>
            <person name="Watanabe A."/>
            <person name="Kawashima K."/>
            <person name="Kishida Y."/>
            <person name="Kiyokawa C."/>
            <person name="Kohara M."/>
            <person name="Matsumoto M."/>
            <person name="Matsuno A."/>
            <person name="Nakazaki N."/>
            <person name="Shimpo S."/>
            <person name="Takeuchi C."/>
            <person name="Yamada M."/>
            <person name="Tabata S."/>
        </authorList>
    </citation>
    <scope>NUCLEOTIDE SEQUENCE [LARGE SCALE GENOMIC DNA]</scope>
    <source>
        <strain>ATCC 29082 / PCC 7421</strain>
    </source>
</reference>
<proteinExistence type="inferred from homology"/>
<keyword id="KW-0028">Amino-acid biosynthesis</keyword>
<keyword id="KW-0057">Aromatic amino acid biosynthesis</keyword>
<keyword id="KW-0456">Lyase</keyword>
<keyword id="KW-1185">Reference proteome</keyword>
<keyword id="KW-0822">Tryptophan biosynthesis</keyword>
<name>TRPA_GLOVI</name>
<protein>
    <recommendedName>
        <fullName evidence="1">Tryptophan synthase alpha chain</fullName>
        <ecNumber evidence="1">4.2.1.20</ecNumber>
    </recommendedName>
</protein>
<evidence type="ECO:0000255" key="1">
    <source>
        <dbReference type="HAMAP-Rule" id="MF_00131"/>
    </source>
</evidence>
<comment type="function">
    <text evidence="1">The alpha subunit is responsible for the aldol cleavage of indoleglycerol phosphate to indole and glyceraldehyde 3-phosphate.</text>
</comment>
<comment type="catalytic activity">
    <reaction evidence="1">
        <text>(1S,2R)-1-C-(indol-3-yl)glycerol 3-phosphate + L-serine = D-glyceraldehyde 3-phosphate + L-tryptophan + H2O</text>
        <dbReference type="Rhea" id="RHEA:10532"/>
        <dbReference type="ChEBI" id="CHEBI:15377"/>
        <dbReference type="ChEBI" id="CHEBI:33384"/>
        <dbReference type="ChEBI" id="CHEBI:57912"/>
        <dbReference type="ChEBI" id="CHEBI:58866"/>
        <dbReference type="ChEBI" id="CHEBI:59776"/>
        <dbReference type="EC" id="4.2.1.20"/>
    </reaction>
</comment>
<comment type="pathway">
    <text evidence="1">Amino-acid biosynthesis; L-tryptophan biosynthesis; L-tryptophan from chorismate: step 5/5.</text>
</comment>
<comment type="subunit">
    <text evidence="1">Tetramer of two alpha and two beta chains.</text>
</comment>
<comment type="similarity">
    <text evidence="1">Belongs to the TrpA family.</text>
</comment>
<sequence>MSSLASPGRIARVFAALHARREVAFIPFITAGDPDLETTAEALLTLDRNGADLLELGLPYSDPLADGPTIQAAATRALARGTTPGAVLDLVARLTPELRAPLIVFTYFNLILAVGIEAFVERLAASGASGLLVPDLPVEEGDALQTAANVQGLDVIWLVAPTSPPERLRRIAERTTGFVYLVSTTGVTGARTQVASSVRTSLAQLRALTTRPVAVGFGISTPEQAHEVASLGADGVIVGSACVQLLATAAPEERLGQLAEFCRQLKKASQTLPVKS</sequence>
<gene>
    <name evidence="1" type="primary">trpA</name>
    <name type="ordered locus">gll2612</name>
</gene>
<dbReference type="EC" id="4.2.1.20" evidence="1"/>
<dbReference type="EMBL" id="BA000045">
    <property type="protein sequence ID" value="BAC90553.1"/>
    <property type="molecule type" value="Genomic_DNA"/>
</dbReference>
<dbReference type="RefSeq" id="NP_925558.1">
    <property type="nucleotide sequence ID" value="NC_005125.1"/>
</dbReference>
<dbReference type="RefSeq" id="WP_011142606.1">
    <property type="nucleotide sequence ID" value="NC_005125.1"/>
</dbReference>
<dbReference type="SMR" id="Q7NHC5"/>
<dbReference type="FunCoup" id="Q7NHC5">
    <property type="interactions" value="208"/>
</dbReference>
<dbReference type="STRING" id="251221.gene:10760112"/>
<dbReference type="EnsemblBacteria" id="BAC90553">
    <property type="protein sequence ID" value="BAC90553"/>
    <property type="gene ID" value="BAC90553"/>
</dbReference>
<dbReference type="KEGG" id="gvi:gll2612"/>
<dbReference type="PATRIC" id="fig|251221.4.peg.2652"/>
<dbReference type="eggNOG" id="COG0159">
    <property type="taxonomic scope" value="Bacteria"/>
</dbReference>
<dbReference type="HOGENOM" id="CLU_016734_0_2_3"/>
<dbReference type="InParanoid" id="Q7NHC5"/>
<dbReference type="OrthoDB" id="9804578at2"/>
<dbReference type="PhylomeDB" id="Q7NHC5"/>
<dbReference type="UniPathway" id="UPA00035">
    <property type="reaction ID" value="UER00044"/>
</dbReference>
<dbReference type="Proteomes" id="UP000000557">
    <property type="component" value="Chromosome"/>
</dbReference>
<dbReference type="GO" id="GO:0005829">
    <property type="term" value="C:cytosol"/>
    <property type="evidence" value="ECO:0000318"/>
    <property type="project" value="GO_Central"/>
</dbReference>
<dbReference type="GO" id="GO:0004834">
    <property type="term" value="F:tryptophan synthase activity"/>
    <property type="evidence" value="ECO:0000318"/>
    <property type="project" value="GO_Central"/>
</dbReference>
<dbReference type="GO" id="GO:0000162">
    <property type="term" value="P:L-tryptophan biosynthetic process"/>
    <property type="evidence" value="ECO:0000318"/>
    <property type="project" value="GO_Central"/>
</dbReference>
<dbReference type="CDD" id="cd04724">
    <property type="entry name" value="Tryptophan_synthase_alpha"/>
    <property type="match status" value="1"/>
</dbReference>
<dbReference type="FunFam" id="3.20.20.70:FF:000107">
    <property type="entry name" value="Tryptophan synthase alpha chain, chloroplastic"/>
    <property type="match status" value="1"/>
</dbReference>
<dbReference type="Gene3D" id="3.20.20.70">
    <property type="entry name" value="Aldolase class I"/>
    <property type="match status" value="1"/>
</dbReference>
<dbReference type="HAMAP" id="MF_00131">
    <property type="entry name" value="Trp_synth_alpha"/>
    <property type="match status" value="1"/>
</dbReference>
<dbReference type="InterPro" id="IPR013785">
    <property type="entry name" value="Aldolase_TIM"/>
</dbReference>
<dbReference type="InterPro" id="IPR011060">
    <property type="entry name" value="RibuloseP-bd_barrel"/>
</dbReference>
<dbReference type="InterPro" id="IPR018204">
    <property type="entry name" value="Trp_synthase_alpha_AS"/>
</dbReference>
<dbReference type="InterPro" id="IPR002028">
    <property type="entry name" value="Trp_synthase_suA"/>
</dbReference>
<dbReference type="NCBIfam" id="TIGR00262">
    <property type="entry name" value="trpA"/>
    <property type="match status" value="1"/>
</dbReference>
<dbReference type="PANTHER" id="PTHR43406:SF1">
    <property type="entry name" value="TRYPTOPHAN SYNTHASE ALPHA CHAIN, CHLOROPLASTIC"/>
    <property type="match status" value="1"/>
</dbReference>
<dbReference type="PANTHER" id="PTHR43406">
    <property type="entry name" value="TRYPTOPHAN SYNTHASE, ALPHA CHAIN"/>
    <property type="match status" value="1"/>
</dbReference>
<dbReference type="Pfam" id="PF00290">
    <property type="entry name" value="Trp_syntA"/>
    <property type="match status" value="1"/>
</dbReference>
<dbReference type="SUPFAM" id="SSF51366">
    <property type="entry name" value="Ribulose-phoshate binding barrel"/>
    <property type="match status" value="1"/>
</dbReference>
<dbReference type="PROSITE" id="PS00167">
    <property type="entry name" value="TRP_SYNTHASE_ALPHA"/>
    <property type="match status" value="1"/>
</dbReference>
<organism>
    <name type="scientific">Gloeobacter violaceus (strain ATCC 29082 / PCC 7421)</name>
    <dbReference type="NCBI Taxonomy" id="251221"/>
    <lineage>
        <taxon>Bacteria</taxon>
        <taxon>Bacillati</taxon>
        <taxon>Cyanobacteriota</taxon>
        <taxon>Cyanophyceae</taxon>
        <taxon>Gloeobacterales</taxon>
        <taxon>Gloeobacteraceae</taxon>
        <taxon>Gloeobacter</taxon>
    </lineage>
</organism>
<accession>Q7NHC5</accession>